<gene>
    <name type="primary">pstC2</name>
    <name type="ordered locus">Rv0929</name>
    <name type="ORF">MTCY21C12.23</name>
</gene>
<reference key="1">
    <citation type="journal article" date="1996" name="FEBS Lett.">
        <title>Identification of a second Mycobacterium tuberculosis gene cluster encoding proteins of an ABC phosphate transporter.</title>
        <authorList>
            <person name="Braibant M."/>
            <person name="Lefevre P."/>
            <person name="de Wit L."/>
            <person name="Ooms J."/>
            <person name="Peirs P."/>
            <person name="Huygen K."/>
            <person name="Wattiez R."/>
            <person name="Content J."/>
        </authorList>
    </citation>
    <scope>NUCLEOTIDE SEQUENCE [GENOMIC DNA]</scope>
    <source>
        <strain>ATCC 35801 / TMC 107 / Erdman</strain>
    </source>
</reference>
<reference key="2">
    <citation type="journal article" date="1998" name="Nature">
        <title>Deciphering the biology of Mycobacterium tuberculosis from the complete genome sequence.</title>
        <authorList>
            <person name="Cole S.T."/>
            <person name="Brosch R."/>
            <person name="Parkhill J."/>
            <person name="Garnier T."/>
            <person name="Churcher C.M."/>
            <person name="Harris D.E."/>
            <person name="Gordon S.V."/>
            <person name="Eiglmeier K."/>
            <person name="Gas S."/>
            <person name="Barry C.E. III"/>
            <person name="Tekaia F."/>
            <person name="Badcock K."/>
            <person name="Basham D."/>
            <person name="Brown D."/>
            <person name="Chillingworth T."/>
            <person name="Connor R."/>
            <person name="Davies R.M."/>
            <person name="Devlin K."/>
            <person name="Feltwell T."/>
            <person name="Gentles S."/>
            <person name="Hamlin N."/>
            <person name="Holroyd S."/>
            <person name="Hornsby T."/>
            <person name="Jagels K."/>
            <person name="Krogh A."/>
            <person name="McLean J."/>
            <person name="Moule S."/>
            <person name="Murphy L.D."/>
            <person name="Oliver S."/>
            <person name="Osborne J."/>
            <person name="Quail M.A."/>
            <person name="Rajandream M.A."/>
            <person name="Rogers J."/>
            <person name="Rutter S."/>
            <person name="Seeger K."/>
            <person name="Skelton S."/>
            <person name="Squares S."/>
            <person name="Squares R."/>
            <person name="Sulston J.E."/>
            <person name="Taylor K."/>
            <person name="Whitehead S."/>
            <person name="Barrell B.G."/>
        </authorList>
    </citation>
    <scope>NUCLEOTIDE SEQUENCE [LARGE SCALE GENOMIC DNA]</scope>
    <source>
        <strain>ATCC 25618 / H37Rv</strain>
    </source>
</reference>
<reference key="3">
    <citation type="journal article" date="2010" name="Tuberculosis">
        <title>Effect of PstS sub-units or PknD deficiency on the survival of Mycobacterium tuberculosis.</title>
        <authorList>
            <person name="Vanzembergh F."/>
            <person name="Peirs P."/>
            <person name="Lefevre P."/>
            <person name="Celio N."/>
            <person name="Mathys V."/>
            <person name="Content J."/>
            <person name="Kalai M."/>
        </authorList>
    </citation>
    <scope>FUNCTION</scope>
    <scope>INDUCTION BY PHOSPHATE STARVATION</scope>
    <source>
        <strain>H37Rv</strain>
    </source>
</reference>
<reference key="4">
    <citation type="journal article" date="2011" name="Mol. Cell. Proteomics">
        <title>Proteogenomic analysis of Mycobacterium tuberculosis by high resolution mass spectrometry.</title>
        <authorList>
            <person name="Kelkar D.S."/>
            <person name="Kumar D."/>
            <person name="Kumar P."/>
            <person name="Balakrishnan L."/>
            <person name="Muthusamy B."/>
            <person name="Yadav A.K."/>
            <person name="Shrivastava P."/>
            <person name="Marimuthu A."/>
            <person name="Anand S."/>
            <person name="Sundaram H."/>
            <person name="Kingsbury R."/>
            <person name="Harsha H.C."/>
            <person name="Nair B."/>
            <person name="Prasad T.S."/>
            <person name="Chauhan D.S."/>
            <person name="Katoch K."/>
            <person name="Katoch V.M."/>
            <person name="Kumar P."/>
            <person name="Chaerkady R."/>
            <person name="Ramachandran S."/>
            <person name="Dash D."/>
            <person name="Pandey A."/>
        </authorList>
    </citation>
    <scope>IDENTIFICATION BY MASS SPECTROMETRY [LARGE SCALE ANALYSIS]</scope>
    <source>
        <strain>ATCC 25618 / H37Rv</strain>
    </source>
</reference>
<keyword id="KW-1003">Cell membrane</keyword>
<keyword id="KW-0472">Membrane</keyword>
<keyword id="KW-0592">Phosphate transport</keyword>
<keyword id="KW-1185">Reference proteome</keyword>
<keyword id="KW-0812">Transmembrane</keyword>
<keyword id="KW-1133">Transmembrane helix</keyword>
<keyword id="KW-0813">Transport</keyword>
<comment type="function">
    <text evidence="5">Part of the ABC transporter complex PstSACB involved in phosphate import; probably responsible for the translocation of the substrate across the membrane.</text>
</comment>
<comment type="subunit">
    <text evidence="4">The complex is composed of two ATP-binding proteins (PstB), two transmembrane proteins (PstC and PstA) and a solute-binding protein (PstS).</text>
</comment>
<comment type="subcellular location">
    <subcellularLocation>
        <location evidence="1">Cell membrane</location>
        <topology evidence="2">Multi-pass membrane protein</topology>
    </subcellularLocation>
</comment>
<comment type="induction">
    <text evidence="3">5-fold by phosphate starvation, part of the pstS3-pstC2-pstA1 operon.</text>
</comment>
<comment type="similarity">
    <text evidence="4">Belongs to the binding-protein-dependent transport system permease family. CysTW subfamily.</text>
</comment>
<organism>
    <name type="scientific">Mycobacterium tuberculosis (strain ATCC 25618 / H37Rv)</name>
    <dbReference type="NCBI Taxonomy" id="83332"/>
    <lineage>
        <taxon>Bacteria</taxon>
        <taxon>Bacillati</taxon>
        <taxon>Actinomycetota</taxon>
        <taxon>Actinomycetes</taxon>
        <taxon>Mycobacteriales</taxon>
        <taxon>Mycobacteriaceae</taxon>
        <taxon>Mycobacterium</taxon>
        <taxon>Mycobacterium tuberculosis complex</taxon>
    </lineage>
</organism>
<protein>
    <recommendedName>
        <fullName>Phosphate transport system permease protein PstC 2</fullName>
    </recommendedName>
</protein>
<sequence length="324" mass="34262">MVTEPLTKPALVAVDMRPARRGERLFKLAASAAGSTIVIAILLIAIFLLVRAVPSLRANHANFFTSTQFDTSDDEQLAFGVRDLFMVTALSSITALVLAVPVAVGIAVFLTHYAPRRLSRPFGAMVDLLAAVPSIIFGLWGIFVLAPKLEPIARFLNRNLGWLFLFKQGNVSLAGGGTIFTAGIVLSVMILPIVTSISREVFRQTPLIQIEAALALGATKWEVVRMTVLPYGRSGVVAASMLGLGRALGETVAVLVILRSAARPGTWSLFDGGYTFASKIASAASEFSEPLPTGAYISAGFALFVLTFLVNAAARAIAGGKVNG</sequence>
<name>PSTC2_MYCTU</name>
<proteinExistence type="evidence at protein level"/>
<accession>P9WG05</accession>
<accession>L0T849</accession>
<accession>O86344</accession>
<accession>P0A630</accession>
<accession>Q50797</accession>
<evidence type="ECO:0000250" key="1"/>
<evidence type="ECO:0000255" key="2">
    <source>
        <dbReference type="PROSITE-ProRule" id="PRU00441"/>
    </source>
</evidence>
<evidence type="ECO:0000269" key="3">
    <source>
    </source>
</evidence>
<evidence type="ECO:0000305" key="4"/>
<evidence type="ECO:0000305" key="5">
    <source>
    </source>
</evidence>
<dbReference type="EMBL" id="Z47983">
    <property type="protein sequence ID" value="CAA88026.1"/>
    <property type="molecule type" value="Genomic_DNA"/>
</dbReference>
<dbReference type="EMBL" id="AL123456">
    <property type="protein sequence ID" value="CCP43677.1"/>
    <property type="molecule type" value="Genomic_DNA"/>
</dbReference>
<dbReference type="PIR" id="A70584">
    <property type="entry name" value="A70584"/>
</dbReference>
<dbReference type="RefSeq" id="NP_215444.1">
    <property type="nucleotide sequence ID" value="NC_000962.3"/>
</dbReference>
<dbReference type="SMR" id="P9WG05"/>
<dbReference type="FunCoup" id="P9WG05">
    <property type="interactions" value="83"/>
</dbReference>
<dbReference type="STRING" id="83332.Rv0929"/>
<dbReference type="PaxDb" id="83332-Rv0929"/>
<dbReference type="DNASU" id="885585"/>
<dbReference type="GeneID" id="885585"/>
<dbReference type="KEGG" id="mtu:Rv0929"/>
<dbReference type="KEGG" id="mtv:RVBD_0929"/>
<dbReference type="TubercuList" id="Rv0929"/>
<dbReference type="eggNOG" id="COG0573">
    <property type="taxonomic scope" value="Bacteria"/>
</dbReference>
<dbReference type="InParanoid" id="P9WG05"/>
<dbReference type="OrthoDB" id="9785113at2"/>
<dbReference type="PhylomeDB" id="P9WG05"/>
<dbReference type="Proteomes" id="UP000001584">
    <property type="component" value="Chromosome"/>
</dbReference>
<dbReference type="GO" id="GO:0005886">
    <property type="term" value="C:plasma membrane"/>
    <property type="evidence" value="ECO:0000318"/>
    <property type="project" value="GO_Central"/>
</dbReference>
<dbReference type="GO" id="GO:0005315">
    <property type="term" value="F:phosphate transmembrane transporter activity"/>
    <property type="evidence" value="ECO:0007669"/>
    <property type="project" value="InterPro"/>
</dbReference>
<dbReference type="GO" id="GO:0051701">
    <property type="term" value="P:biological process involved in interaction with host"/>
    <property type="evidence" value="ECO:0000315"/>
    <property type="project" value="MTBBASE"/>
</dbReference>
<dbReference type="GO" id="GO:0035435">
    <property type="term" value="P:phosphate ion transmembrane transport"/>
    <property type="evidence" value="ECO:0000318"/>
    <property type="project" value="GO_Central"/>
</dbReference>
<dbReference type="CDD" id="cd06261">
    <property type="entry name" value="TM_PBP2"/>
    <property type="match status" value="1"/>
</dbReference>
<dbReference type="FunFam" id="1.10.3720.10:FF:000112">
    <property type="entry name" value="Phosphate transport system permease protein"/>
    <property type="match status" value="1"/>
</dbReference>
<dbReference type="Gene3D" id="1.10.3720.10">
    <property type="entry name" value="MetI-like"/>
    <property type="match status" value="1"/>
</dbReference>
<dbReference type="InterPro" id="IPR000515">
    <property type="entry name" value="MetI-like"/>
</dbReference>
<dbReference type="InterPro" id="IPR035906">
    <property type="entry name" value="MetI-like_sf"/>
</dbReference>
<dbReference type="InterPro" id="IPR011864">
    <property type="entry name" value="Phosphate_PstC"/>
</dbReference>
<dbReference type="InterPro" id="IPR051124">
    <property type="entry name" value="Phosphate_Transport_Permease"/>
</dbReference>
<dbReference type="NCBIfam" id="TIGR02138">
    <property type="entry name" value="phosphate_pstC"/>
    <property type="match status" value="1"/>
</dbReference>
<dbReference type="PANTHER" id="PTHR30425">
    <property type="entry name" value="PHOSPHATE TRANSPORT SYSTEM PERMEASE PROTEIN PST"/>
    <property type="match status" value="1"/>
</dbReference>
<dbReference type="PANTHER" id="PTHR30425:SF1">
    <property type="entry name" value="PHOSPHATE TRANSPORT SYSTEM PERMEASE PROTEIN PSTC"/>
    <property type="match status" value="1"/>
</dbReference>
<dbReference type="Pfam" id="PF00528">
    <property type="entry name" value="BPD_transp_1"/>
    <property type="match status" value="1"/>
</dbReference>
<dbReference type="SUPFAM" id="SSF161098">
    <property type="entry name" value="MetI-like"/>
    <property type="match status" value="1"/>
</dbReference>
<dbReference type="PROSITE" id="PS50928">
    <property type="entry name" value="ABC_TM1"/>
    <property type="match status" value="1"/>
</dbReference>
<feature type="chain" id="PRO_0000060219" description="Phosphate transport system permease protein PstC 2">
    <location>
        <begin position="1"/>
        <end position="324"/>
    </location>
</feature>
<feature type="transmembrane region" description="Helical" evidence="2">
    <location>
        <begin position="30"/>
        <end position="50"/>
    </location>
</feature>
<feature type="transmembrane region" description="Helical" evidence="2">
    <location>
        <begin position="90"/>
        <end position="110"/>
    </location>
</feature>
<feature type="transmembrane region" description="Helical" evidence="2">
    <location>
        <begin position="125"/>
        <end position="145"/>
    </location>
</feature>
<feature type="transmembrane region" description="Helical" evidence="2">
    <location>
        <begin position="174"/>
        <end position="194"/>
    </location>
</feature>
<feature type="transmembrane region" description="Helical" evidence="2">
    <location>
        <begin position="237"/>
        <end position="257"/>
    </location>
</feature>
<feature type="transmembrane region" description="Helical" evidence="2">
    <location>
        <begin position="290"/>
        <end position="310"/>
    </location>
</feature>
<feature type="domain" description="ABC transmembrane type-1" evidence="2">
    <location>
        <begin position="85"/>
        <end position="314"/>
    </location>
</feature>
<feature type="sequence conflict" description="In Ref. 1; CAA88026." evidence="4" ref="1">
    <location>
        <position position="19"/>
    </location>
</feature>